<dbReference type="EMBL" id="M98835">
    <property type="protein sequence ID" value="AAA26359.1"/>
    <property type="molecule type" value="Genomic_DNA"/>
</dbReference>
<dbReference type="PIR" id="C41887">
    <property type="entry name" value="C41887"/>
</dbReference>
<dbReference type="RefSeq" id="WP_011654213.1">
    <property type="nucleotide sequence ID" value="NZ_WIFA01000003.1"/>
</dbReference>
<dbReference type="OMA" id="NAYCMIN"/>
<dbReference type="GO" id="GO:0042597">
    <property type="term" value="C:periplasmic space"/>
    <property type="evidence" value="ECO:0007669"/>
    <property type="project" value="UniProtKB-SubCell"/>
</dbReference>
<name>RHIC_RHILV</name>
<gene>
    <name type="primary">rhiC</name>
</gene>
<feature type="signal peptide" evidence="1">
    <location>
        <begin position="1"/>
        <end position="23"/>
    </location>
</feature>
<feature type="chain" id="PRO_0000022224" description="Protein RhiC">
    <location>
        <begin position="24"/>
        <end position="149"/>
    </location>
</feature>
<reference key="1">
    <citation type="journal article" date="1992" name="J. Bacteriol.">
        <title>Molecular characterization and regulation of the rhizosphere-expressed genes rhiABCR that can influence nodulation by Rhizobium leguminosarum biovar viciae.</title>
        <authorList>
            <person name="Cubo M.T."/>
            <person name="Economou A."/>
            <person name="Murphy G.J."/>
            <person name="Johnston A.W."/>
            <person name="Downie J.A."/>
        </authorList>
    </citation>
    <scope>NUCLEOTIDE SEQUENCE [GENOMIC DNA]</scope>
</reference>
<comment type="function">
    <text>May be involved in plant-microbe interaction.</text>
</comment>
<comment type="subcellular location">
    <subcellularLocation>
        <location>Periplasm</location>
    </subcellularLocation>
</comment>
<organism>
    <name type="scientific">Rhizobium leguminosarum bv. viciae</name>
    <dbReference type="NCBI Taxonomy" id="387"/>
    <lineage>
        <taxon>Bacteria</taxon>
        <taxon>Pseudomonadati</taxon>
        <taxon>Pseudomonadota</taxon>
        <taxon>Alphaproteobacteria</taxon>
        <taxon>Hyphomicrobiales</taxon>
        <taxon>Rhizobiaceae</taxon>
        <taxon>Rhizobium/Agrobacterium group</taxon>
        <taxon>Rhizobium</taxon>
    </lineage>
</organism>
<accession>Q03315</accession>
<geneLocation type="plasmid">
    <name>sym pRL1JI</name>
</geneLocation>
<keyword id="KW-0574">Periplasm</keyword>
<keyword id="KW-0614">Plasmid</keyword>
<keyword id="KW-0732">Signal</keyword>
<protein>
    <recommendedName>
        <fullName>Protein RhiC</fullName>
    </recommendedName>
</protein>
<sequence>MTATLRAFGWLAAFALTVTFAQGAAAEEQQKGKVGAKPVETGVVIRGVTLAGPVGNPGTSTGKTCDFSGEPVDPSGRLEGASVNCRPNGNQANTTPGLPARFNAYCMINAPVKSARLIQAARPENANHCDLSGITPKDATGQFGGAVWR</sequence>
<proteinExistence type="inferred from homology"/>
<evidence type="ECO:0000255" key="1"/>